<comment type="function">
    <text evidence="1">One of the early assembly proteins it binds 23S rRNA. One of the proteins that surrounds the polypeptide exit tunnel on the outside of the ribosome. Forms the main docking site for trigger factor binding to the ribosome.</text>
</comment>
<comment type="subunit">
    <text evidence="1">Part of the 50S ribosomal subunit. Contacts protein L29, and trigger factor when it is bound to the ribosome.</text>
</comment>
<comment type="similarity">
    <text evidence="1">Belongs to the universal ribosomal protein uL23 family.</text>
</comment>
<accession>Q5F5S9</accession>
<gene>
    <name evidence="1" type="primary">rplW</name>
    <name type="ordered locus">NGO_1836</name>
</gene>
<dbReference type="EMBL" id="AE004969">
    <property type="protein sequence ID" value="AAW90458.1"/>
    <property type="molecule type" value="Genomic_DNA"/>
</dbReference>
<dbReference type="RefSeq" id="YP_208870.1">
    <property type="nucleotide sequence ID" value="NC_002946.2"/>
</dbReference>
<dbReference type="SMR" id="Q5F5S9"/>
<dbReference type="STRING" id="242231.NGO_1836"/>
<dbReference type="KEGG" id="ngo:NGO_1836"/>
<dbReference type="PATRIC" id="fig|242231.10.peg.2207"/>
<dbReference type="HOGENOM" id="CLU_037562_3_1_4"/>
<dbReference type="Proteomes" id="UP000000535">
    <property type="component" value="Chromosome"/>
</dbReference>
<dbReference type="GO" id="GO:1990904">
    <property type="term" value="C:ribonucleoprotein complex"/>
    <property type="evidence" value="ECO:0007669"/>
    <property type="project" value="UniProtKB-KW"/>
</dbReference>
<dbReference type="GO" id="GO:0005840">
    <property type="term" value="C:ribosome"/>
    <property type="evidence" value="ECO:0007669"/>
    <property type="project" value="UniProtKB-KW"/>
</dbReference>
<dbReference type="GO" id="GO:0019843">
    <property type="term" value="F:rRNA binding"/>
    <property type="evidence" value="ECO:0007669"/>
    <property type="project" value="UniProtKB-UniRule"/>
</dbReference>
<dbReference type="GO" id="GO:0003735">
    <property type="term" value="F:structural constituent of ribosome"/>
    <property type="evidence" value="ECO:0007669"/>
    <property type="project" value="InterPro"/>
</dbReference>
<dbReference type="GO" id="GO:0006412">
    <property type="term" value="P:translation"/>
    <property type="evidence" value="ECO:0007669"/>
    <property type="project" value="UniProtKB-UniRule"/>
</dbReference>
<dbReference type="FunFam" id="3.30.70.330:FF:000001">
    <property type="entry name" value="50S ribosomal protein L23"/>
    <property type="match status" value="1"/>
</dbReference>
<dbReference type="Gene3D" id="3.30.70.330">
    <property type="match status" value="1"/>
</dbReference>
<dbReference type="HAMAP" id="MF_01369_B">
    <property type="entry name" value="Ribosomal_uL23_B"/>
    <property type="match status" value="1"/>
</dbReference>
<dbReference type="InterPro" id="IPR012677">
    <property type="entry name" value="Nucleotide-bd_a/b_plait_sf"/>
</dbReference>
<dbReference type="InterPro" id="IPR013025">
    <property type="entry name" value="Ribosomal_uL23-like"/>
</dbReference>
<dbReference type="InterPro" id="IPR012678">
    <property type="entry name" value="Ribosomal_uL23/eL15/eS24_sf"/>
</dbReference>
<dbReference type="NCBIfam" id="NF004359">
    <property type="entry name" value="PRK05738.1-3"/>
    <property type="match status" value="1"/>
</dbReference>
<dbReference type="NCBIfam" id="NF004363">
    <property type="entry name" value="PRK05738.2-4"/>
    <property type="match status" value="1"/>
</dbReference>
<dbReference type="PANTHER" id="PTHR11620">
    <property type="entry name" value="60S RIBOSOMAL PROTEIN L23A"/>
    <property type="match status" value="1"/>
</dbReference>
<dbReference type="Pfam" id="PF00276">
    <property type="entry name" value="Ribosomal_L23"/>
    <property type="match status" value="1"/>
</dbReference>
<dbReference type="SUPFAM" id="SSF54189">
    <property type="entry name" value="Ribosomal proteins S24e, L23 and L15e"/>
    <property type="match status" value="1"/>
</dbReference>
<organism>
    <name type="scientific">Neisseria gonorrhoeae (strain ATCC 700825 / FA 1090)</name>
    <dbReference type="NCBI Taxonomy" id="242231"/>
    <lineage>
        <taxon>Bacteria</taxon>
        <taxon>Pseudomonadati</taxon>
        <taxon>Pseudomonadota</taxon>
        <taxon>Betaproteobacteria</taxon>
        <taxon>Neisseriales</taxon>
        <taxon>Neisseriaceae</taxon>
        <taxon>Neisseria</taxon>
    </lineage>
</organism>
<proteinExistence type="inferred from homology"/>
<reference key="1">
    <citation type="submission" date="2003-03" db="EMBL/GenBank/DDBJ databases">
        <title>The complete genome sequence of Neisseria gonorrhoeae.</title>
        <authorList>
            <person name="Lewis L.A."/>
            <person name="Gillaspy A.F."/>
            <person name="McLaughlin R.E."/>
            <person name="Gipson M."/>
            <person name="Ducey T.F."/>
            <person name="Ownbey T."/>
            <person name="Hartman K."/>
            <person name="Nydick C."/>
            <person name="Carson M.B."/>
            <person name="Vaughn J."/>
            <person name="Thomson C."/>
            <person name="Song L."/>
            <person name="Lin S."/>
            <person name="Yuan X."/>
            <person name="Najar F."/>
            <person name="Zhan M."/>
            <person name="Ren Q."/>
            <person name="Zhu H."/>
            <person name="Qi S."/>
            <person name="Kenton S.M."/>
            <person name="Lai H."/>
            <person name="White J.D."/>
            <person name="Clifton S."/>
            <person name="Roe B.A."/>
            <person name="Dyer D.W."/>
        </authorList>
    </citation>
    <scope>NUCLEOTIDE SEQUENCE [LARGE SCALE GENOMIC DNA]</scope>
    <source>
        <strain>ATCC 700825 / FA 1090</strain>
    </source>
</reference>
<evidence type="ECO:0000255" key="1">
    <source>
        <dbReference type="HAMAP-Rule" id="MF_01369"/>
    </source>
</evidence>
<evidence type="ECO:0000305" key="2"/>
<feature type="chain" id="PRO_0000272781" description="Large ribosomal subunit protein uL23">
    <location>
        <begin position="1"/>
        <end position="106"/>
    </location>
</feature>
<keyword id="KW-1185">Reference proteome</keyword>
<keyword id="KW-0687">Ribonucleoprotein</keyword>
<keyword id="KW-0689">Ribosomal protein</keyword>
<keyword id="KW-0694">RNA-binding</keyword>
<keyword id="KW-0699">rRNA-binding</keyword>
<name>RL23_NEIG1</name>
<sequence length="106" mass="11463">MGMNQQRLTQVILVPVVSEKSNVLAEKCNQMTFKVLANATKPEIKAAVELLFGVQVASVTTVTTKGKTKRFGRILGRRSDVKKAYVSLVDGQELDLEAAAAAADKE</sequence>
<protein>
    <recommendedName>
        <fullName evidence="1">Large ribosomal subunit protein uL23</fullName>
    </recommendedName>
    <alternativeName>
        <fullName evidence="2">50S ribosomal protein L23</fullName>
    </alternativeName>
</protein>